<accession>Q9SGY2</accession>
<accession>Q56WG2</accession>
<accession>Q8LAY1</accession>
<gene>
    <name type="primary">ACLA-1</name>
    <name type="ordered locus">At1g10670</name>
    <name type="ORF">F20B24.11</name>
</gene>
<evidence type="ECO:0000250" key="1"/>
<evidence type="ECO:0000269" key="2">
    <source>
    </source>
</evidence>
<evidence type="ECO:0000269" key="3">
    <source>
    </source>
</evidence>
<evidence type="ECO:0000305" key="4"/>
<feature type="chain" id="PRO_0000412215" description="ATP-citrate synthase alpha chain protein 1">
    <location>
        <begin position="1"/>
        <end position="423"/>
    </location>
</feature>
<feature type="binding site" evidence="1">
    <location>
        <position position="343"/>
    </location>
    <ligand>
        <name>citrate</name>
        <dbReference type="ChEBI" id="CHEBI:16947"/>
    </ligand>
</feature>
<feature type="binding site" evidence="1">
    <location>
        <position position="345"/>
    </location>
    <ligand>
        <name>citrate</name>
        <dbReference type="ChEBI" id="CHEBI:16947"/>
    </ligand>
</feature>
<feature type="binding site" evidence="1">
    <location>
        <position position="376"/>
    </location>
    <ligand>
        <name>citrate</name>
        <dbReference type="ChEBI" id="CHEBI:16947"/>
    </ligand>
</feature>
<feature type="sequence conflict" description="In Ref. 6; AAM65078." evidence="4" ref="6">
    <original>D</original>
    <variation>Y</variation>
    <location>
        <position position="232"/>
    </location>
</feature>
<feature type="sequence conflict" description="In Ref. 6; AAM65078." evidence="4" ref="6">
    <original>G</original>
    <variation>R</variation>
    <location>
        <position position="378"/>
    </location>
</feature>
<dbReference type="EC" id="2.3.3.8"/>
<dbReference type="EMBL" id="AY056593">
    <property type="protein sequence ID" value="AAL25637.1"/>
    <property type="molecule type" value="mRNA"/>
</dbReference>
<dbReference type="EMBL" id="AC009398">
    <property type="protein sequence ID" value="AAF17657.1"/>
    <property type="molecule type" value="Genomic_DNA"/>
</dbReference>
<dbReference type="EMBL" id="CP002684">
    <property type="protein sequence ID" value="AEE28624.1"/>
    <property type="molecule type" value="Genomic_DNA"/>
</dbReference>
<dbReference type="EMBL" id="CP002684">
    <property type="protein sequence ID" value="AEE28625.1"/>
    <property type="molecule type" value="Genomic_DNA"/>
</dbReference>
<dbReference type="EMBL" id="CP002684">
    <property type="protein sequence ID" value="AEE28627.1"/>
    <property type="molecule type" value="Genomic_DNA"/>
</dbReference>
<dbReference type="EMBL" id="AY056213">
    <property type="protein sequence ID" value="AAL07062.1"/>
    <property type="molecule type" value="mRNA"/>
</dbReference>
<dbReference type="EMBL" id="AY094479">
    <property type="protein sequence ID" value="AAM19846.1"/>
    <property type="molecule type" value="mRNA"/>
</dbReference>
<dbReference type="EMBL" id="AY113979">
    <property type="protein sequence ID" value="AAM45027.1"/>
    <property type="molecule type" value="mRNA"/>
</dbReference>
<dbReference type="EMBL" id="AK222079">
    <property type="protein sequence ID" value="BAD94933.1"/>
    <property type="status" value="ALT_INIT"/>
    <property type="molecule type" value="mRNA"/>
</dbReference>
<dbReference type="EMBL" id="AK230271">
    <property type="protein sequence ID" value="BAF02073.1"/>
    <property type="molecule type" value="mRNA"/>
</dbReference>
<dbReference type="EMBL" id="AY087536">
    <property type="protein sequence ID" value="AAM65078.1"/>
    <property type="molecule type" value="mRNA"/>
</dbReference>
<dbReference type="RefSeq" id="NP_001184954.1">
    <molecule id="Q9SGY2-1"/>
    <property type="nucleotide sequence ID" value="NM_001198025.1"/>
</dbReference>
<dbReference type="RefSeq" id="NP_172537.1">
    <molecule id="Q9SGY2-1"/>
    <property type="nucleotide sequence ID" value="NM_100943.4"/>
</dbReference>
<dbReference type="RefSeq" id="NP_849634.1">
    <molecule id="Q9SGY2-1"/>
    <property type="nucleotide sequence ID" value="NM_179303.4"/>
</dbReference>
<dbReference type="SMR" id="Q9SGY2"/>
<dbReference type="BioGRID" id="22850">
    <property type="interactions" value="1"/>
</dbReference>
<dbReference type="FunCoup" id="Q9SGY2">
    <property type="interactions" value="1367"/>
</dbReference>
<dbReference type="IntAct" id="Q9SGY2">
    <property type="interactions" value="1"/>
</dbReference>
<dbReference type="STRING" id="3702.Q9SGY2"/>
<dbReference type="iPTMnet" id="Q9SGY2"/>
<dbReference type="PaxDb" id="3702-AT1G10670.3"/>
<dbReference type="ProteomicsDB" id="244643">
    <molecule id="Q9SGY2-1"/>
</dbReference>
<dbReference type="EnsemblPlants" id="AT1G10670.1">
    <molecule id="Q9SGY2-1"/>
    <property type="protein sequence ID" value="AT1G10670.1"/>
    <property type="gene ID" value="AT1G10670"/>
</dbReference>
<dbReference type="EnsemblPlants" id="AT1G10670.2">
    <molecule id="Q9SGY2-1"/>
    <property type="protein sequence ID" value="AT1G10670.2"/>
    <property type="gene ID" value="AT1G10670"/>
</dbReference>
<dbReference type="EnsemblPlants" id="AT1G10670.4">
    <molecule id="Q9SGY2-1"/>
    <property type="protein sequence ID" value="AT1G10670.4"/>
    <property type="gene ID" value="AT1G10670"/>
</dbReference>
<dbReference type="GeneID" id="837610"/>
<dbReference type="Gramene" id="AT1G10670.1">
    <molecule id="Q9SGY2-1"/>
    <property type="protein sequence ID" value="AT1G10670.1"/>
    <property type="gene ID" value="AT1G10670"/>
</dbReference>
<dbReference type="Gramene" id="AT1G10670.2">
    <molecule id="Q9SGY2-1"/>
    <property type="protein sequence ID" value="AT1G10670.2"/>
    <property type="gene ID" value="AT1G10670"/>
</dbReference>
<dbReference type="Gramene" id="AT1G10670.4">
    <molecule id="Q9SGY2-1"/>
    <property type="protein sequence ID" value="AT1G10670.4"/>
    <property type="gene ID" value="AT1G10670"/>
</dbReference>
<dbReference type="KEGG" id="ath:AT1G10670"/>
<dbReference type="Araport" id="AT1G10670"/>
<dbReference type="TAIR" id="AT1G10670">
    <property type="gene designation" value="ACLA-1"/>
</dbReference>
<dbReference type="eggNOG" id="KOG1254">
    <property type="taxonomic scope" value="Eukaryota"/>
</dbReference>
<dbReference type="HOGENOM" id="CLU_006587_3_1_1"/>
<dbReference type="InParanoid" id="Q9SGY2"/>
<dbReference type="OMA" id="KKWGDTE"/>
<dbReference type="OrthoDB" id="3261737at2759"/>
<dbReference type="PhylomeDB" id="Q9SGY2"/>
<dbReference type="BioCyc" id="MetaCyc:AT1G10670-MONOMER"/>
<dbReference type="CD-CODE" id="4299E36E">
    <property type="entry name" value="Nucleolus"/>
</dbReference>
<dbReference type="PRO" id="PR:Q9SGY2"/>
<dbReference type="Proteomes" id="UP000006548">
    <property type="component" value="Chromosome 1"/>
</dbReference>
<dbReference type="ExpressionAtlas" id="Q9SGY2">
    <property type="expression patterns" value="baseline and differential"/>
</dbReference>
<dbReference type="GO" id="GO:0005829">
    <property type="term" value="C:cytosol"/>
    <property type="evidence" value="ECO:0007669"/>
    <property type="project" value="UniProtKB-SubCell"/>
</dbReference>
<dbReference type="GO" id="GO:0005524">
    <property type="term" value="F:ATP binding"/>
    <property type="evidence" value="ECO:0007669"/>
    <property type="project" value="UniProtKB-KW"/>
</dbReference>
<dbReference type="GO" id="GO:0003878">
    <property type="term" value="F:ATP citrate synthase activity"/>
    <property type="evidence" value="ECO:0007669"/>
    <property type="project" value="UniProtKB-EC"/>
</dbReference>
<dbReference type="GO" id="GO:0006629">
    <property type="term" value="P:lipid metabolic process"/>
    <property type="evidence" value="ECO:0007669"/>
    <property type="project" value="UniProtKB-KW"/>
</dbReference>
<dbReference type="FunFam" id="3.30.470.110:FF:000002">
    <property type="entry name" value="ATP-citrate synthase alpha chain protein"/>
    <property type="match status" value="1"/>
</dbReference>
<dbReference type="FunFam" id="3.40.50.261:FF:000008">
    <property type="entry name" value="ATP-citrate synthase alpha chain protein"/>
    <property type="match status" value="1"/>
</dbReference>
<dbReference type="Gene3D" id="3.30.470.110">
    <property type="match status" value="1"/>
</dbReference>
<dbReference type="Gene3D" id="3.40.50.261">
    <property type="entry name" value="Succinyl-CoA synthetase domains"/>
    <property type="match status" value="1"/>
</dbReference>
<dbReference type="InterPro" id="IPR032263">
    <property type="entry name" value="Citrate-bd"/>
</dbReference>
<dbReference type="InterPro" id="IPR056749">
    <property type="entry name" value="Citrate_synth_N"/>
</dbReference>
<dbReference type="InterPro" id="IPR016102">
    <property type="entry name" value="Succinyl-CoA_synth-like"/>
</dbReference>
<dbReference type="PANTHER" id="PTHR11815:SF10">
    <property type="entry name" value="SUCCINATE--COA LIGASE [GDP-FORMING] SUBUNIT BETA, MITOCHONDRIAL"/>
    <property type="match status" value="1"/>
</dbReference>
<dbReference type="PANTHER" id="PTHR11815">
    <property type="entry name" value="SUCCINYL-COA SYNTHETASE BETA CHAIN"/>
    <property type="match status" value="1"/>
</dbReference>
<dbReference type="Pfam" id="PF16114">
    <property type="entry name" value="Citrate_bind"/>
    <property type="match status" value="1"/>
</dbReference>
<dbReference type="Pfam" id="PF24948">
    <property type="entry name" value="Citrate_synth_N"/>
    <property type="match status" value="1"/>
</dbReference>
<dbReference type="SUPFAM" id="SSF56059">
    <property type="entry name" value="Glutathione synthetase ATP-binding domain-like"/>
    <property type="match status" value="1"/>
</dbReference>
<dbReference type="SUPFAM" id="SSF52210">
    <property type="entry name" value="Succinyl-CoA synthetase domains"/>
    <property type="match status" value="1"/>
</dbReference>
<organism>
    <name type="scientific">Arabidopsis thaliana</name>
    <name type="common">Mouse-ear cress</name>
    <dbReference type="NCBI Taxonomy" id="3702"/>
    <lineage>
        <taxon>Eukaryota</taxon>
        <taxon>Viridiplantae</taxon>
        <taxon>Streptophyta</taxon>
        <taxon>Embryophyta</taxon>
        <taxon>Tracheophyta</taxon>
        <taxon>Spermatophyta</taxon>
        <taxon>Magnoliopsida</taxon>
        <taxon>eudicotyledons</taxon>
        <taxon>Gunneridae</taxon>
        <taxon>Pentapetalae</taxon>
        <taxon>rosids</taxon>
        <taxon>malvids</taxon>
        <taxon>Brassicales</taxon>
        <taxon>Brassicaceae</taxon>
        <taxon>Camelineae</taxon>
        <taxon>Arabidopsis</taxon>
    </lineage>
</organism>
<keyword id="KW-0012">Acyltransferase</keyword>
<keyword id="KW-0025">Alternative splicing</keyword>
<keyword id="KW-0067">ATP-binding</keyword>
<keyword id="KW-0963">Cytoplasm</keyword>
<keyword id="KW-0444">Lipid biosynthesis</keyword>
<keyword id="KW-0443">Lipid metabolism</keyword>
<keyword id="KW-0547">Nucleotide-binding</keyword>
<keyword id="KW-1185">Reference proteome</keyword>
<keyword id="KW-0808">Transferase</keyword>
<protein>
    <recommendedName>
        <fullName>ATP-citrate synthase alpha chain protein 1</fullName>
        <shortName>ATP-citrate synthase A-1</shortName>
        <ecNumber>2.3.3.8</ecNumber>
    </recommendedName>
    <alternativeName>
        <fullName>ATP-citrate lyase A-1</fullName>
    </alternativeName>
    <alternativeName>
        <fullName>Citrate cleavage enzyme A-1</fullName>
    </alternativeName>
</protein>
<sequence>MARKKIREYDSKRLVKEHFKRLSGKELPIRSVQINETTDLNELVEKEPWLSSEKLVVKPDMLFGKRGKSGLVALKLDFADVATFVKERLGKEVEMSGCKGPITTFIVEPFVPHNEEYYLNVVSDRLGCSISFSECGGIEIEENWDKVKTIFLPTGASLTPEICAPLVATLPLEIKAEIEEFIKVIFTLFQDLDFTFLEMNPFTLVDGSPYPLDMRGELDDTAAFKNFKKWGDIEFPLPFGRVMSPTESFIHGLDEKTSASLKFTVLNPKGRIWTMVAGGGASVIYADTVGDLGYASELGNYAEYSGAPKEDEVLQYARVVIDCATANPDGKSRALVIGGGIANFTDVAATFNGIIRALKEKEAKLKAARMHIFVRRGGPNYQKGLAKMRALGDDIGVPIEVYGPEATMTGICKEAIQYITAAA</sequence>
<reference key="1">
    <citation type="journal article" date="2002" name="Plant Physiol.">
        <title>Molecular characterization of a heteromeric ATP-citrate lyase that generates cytosolic acetyl-coenzyme A in Arabidopsis.</title>
        <authorList>
            <person name="Fatland B.L."/>
            <person name="Ke J."/>
            <person name="Anderson M.D."/>
            <person name="Mentzen W.I."/>
            <person name="Cui L.W."/>
            <person name="Allred C.C."/>
            <person name="Johnston J.L."/>
            <person name="Nikolau B.J."/>
            <person name="Wurtele E.S."/>
        </authorList>
    </citation>
    <scope>NUCLEOTIDE SEQUENCE [MRNA]</scope>
    <scope>FUNCTION</scope>
    <scope>SUBUNIT</scope>
    <scope>SUBCELLULAR LOCATION</scope>
    <scope>TISSUE SPECIFICITY</scope>
    <scope>DEVELOPMENTAL STAGE</scope>
    <source>
        <strain>cv. Columbia</strain>
    </source>
</reference>
<reference key="2">
    <citation type="journal article" date="2000" name="Nature">
        <title>Sequence and analysis of chromosome 1 of the plant Arabidopsis thaliana.</title>
        <authorList>
            <person name="Theologis A."/>
            <person name="Ecker J.R."/>
            <person name="Palm C.J."/>
            <person name="Federspiel N.A."/>
            <person name="Kaul S."/>
            <person name="White O."/>
            <person name="Alonso J."/>
            <person name="Altafi H."/>
            <person name="Araujo R."/>
            <person name="Bowman C.L."/>
            <person name="Brooks S.Y."/>
            <person name="Buehler E."/>
            <person name="Chan A."/>
            <person name="Chao Q."/>
            <person name="Chen H."/>
            <person name="Cheuk R.F."/>
            <person name="Chin C.W."/>
            <person name="Chung M.K."/>
            <person name="Conn L."/>
            <person name="Conway A.B."/>
            <person name="Conway A.R."/>
            <person name="Creasy T.H."/>
            <person name="Dewar K."/>
            <person name="Dunn P."/>
            <person name="Etgu P."/>
            <person name="Feldblyum T.V."/>
            <person name="Feng J.-D."/>
            <person name="Fong B."/>
            <person name="Fujii C.Y."/>
            <person name="Gill J.E."/>
            <person name="Goldsmith A.D."/>
            <person name="Haas B."/>
            <person name="Hansen N.F."/>
            <person name="Hughes B."/>
            <person name="Huizar L."/>
            <person name="Hunter J.L."/>
            <person name="Jenkins J."/>
            <person name="Johnson-Hopson C."/>
            <person name="Khan S."/>
            <person name="Khaykin E."/>
            <person name="Kim C.J."/>
            <person name="Koo H.L."/>
            <person name="Kremenetskaia I."/>
            <person name="Kurtz D.B."/>
            <person name="Kwan A."/>
            <person name="Lam B."/>
            <person name="Langin-Hooper S."/>
            <person name="Lee A."/>
            <person name="Lee J.M."/>
            <person name="Lenz C.A."/>
            <person name="Li J.H."/>
            <person name="Li Y.-P."/>
            <person name="Lin X."/>
            <person name="Liu S.X."/>
            <person name="Liu Z.A."/>
            <person name="Luros J.S."/>
            <person name="Maiti R."/>
            <person name="Marziali A."/>
            <person name="Militscher J."/>
            <person name="Miranda M."/>
            <person name="Nguyen M."/>
            <person name="Nierman W.C."/>
            <person name="Osborne B.I."/>
            <person name="Pai G."/>
            <person name="Peterson J."/>
            <person name="Pham P.K."/>
            <person name="Rizzo M."/>
            <person name="Rooney T."/>
            <person name="Rowley D."/>
            <person name="Sakano H."/>
            <person name="Salzberg S.L."/>
            <person name="Schwartz J.R."/>
            <person name="Shinn P."/>
            <person name="Southwick A.M."/>
            <person name="Sun H."/>
            <person name="Tallon L.J."/>
            <person name="Tambunga G."/>
            <person name="Toriumi M.J."/>
            <person name="Town C.D."/>
            <person name="Utterback T."/>
            <person name="Van Aken S."/>
            <person name="Vaysberg M."/>
            <person name="Vysotskaia V.S."/>
            <person name="Walker M."/>
            <person name="Wu D."/>
            <person name="Yu G."/>
            <person name="Fraser C.M."/>
            <person name="Venter J.C."/>
            <person name="Davis R.W."/>
        </authorList>
    </citation>
    <scope>NUCLEOTIDE SEQUENCE [LARGE SCALE GENOMIC DNA]</scope>
    <source>
        <strain>cv. Columbia</strain>
    </source>
</reference>
<reference key="3">
    <citation type="journal article" date="2017" name="Plant J.">
        <title>Araport11: a complete reannotation of the Arabidopsis thaliana reference genome.</title>
        <authorList>
            <person name="Cheng C.Y."/>
            <person name="Krishnakumar V."/>
            <person name="Chan A.P."/>
            <person name="Thibaud-Nissen F."/>
            <person name="Schobel S."/>
            <person name="Town C.D."/>
        </authorList>
    </citation>
    <scope>GENOME REANNOTATION</scope>
    <source>
        <strain>cv. Columbia</strain>
    </source>
</reference>
<reference key="4">
    <citation type="journal article" date="2003" name="Science">
        <title>Empirical analysis of transcriptional activity in the Arabidopsis genome.</title>
        <authorList>
            <person name="Yamada K."/>
            <person name="Lim J."/>
            <person name="Dale J.M."/>
            <person name="Chen H."/>
            <person name="Shinn P."/>
            <person name="Palm C.J."/>
            <person name="Southwick A.M."/>
            <person name="Wu H.C."/>
            <person name="Kim C.J."/>
            <person name="Nguyen M."/>
            <person name="Pham P.K."/>
            <person name="Cheuk R.F."/>
            <person name="Karlin-Newmann G."/>
            <person name="Liu S.X."/>
            <person name="Lam B."/>
            <person name="Sakano H."/>
            <person name="Wu T."/>
            <person name="Yu G."/>
            <person name="Miranda M."/>
            <person name="Quach H.L."/>
            <person name="Tripp M."/>
            <person name="Chang C.H."/>
            <person name="Lee J.M."/>
            <person name="Toriumi M.J."/>
            <person name="Chan M.M."/>
            <person name="Tang C.C."/>
            <person name="Onodera C.S."/>
            <person name="Deng J.M."/>
            <person name="Akiyama K."/>
            <person name="Ansari Y."/>
            <person name="Arakawa T."/>
            <person name="Banh J."/>
            <person name="Banno F."/>
            <person name="Bowser L."/>
            <person name="Brooks S.Y."/>
            <person name="Carninci P."/>
            <person name="Chao Q."/>
            <person name="Choy N."/>
            <person name="Enju A."/>
            <person name="Goldsmith A.D."/>
            <person name="Gurjal M."/>
            <person name="Hansen N.F."/>
            <person name="Hayashizaki Y."/>
            <person name="Johnson-Hopson C."/>
            <person name="Hsuan V.W."/>
            <person name="Iida K."/>
            <person name="Karnes M."/>
            <person name="Khan S."/>
            <person name="Koesema E."/>
            <person name="Ishida J."/>
            <person name="Jiang P.X."/>
            <person name="Jones T."/>
            <person name="Kawai J."/>
            <person name="Kamiya A."/>
            <person name="Meyers C."/>
            <person name="Nakajima M."/>
            <person name="Narusaka M."/>
            <person name="Seki M."/>
            <person name="Sakurai T."/>
            <person name="Satou M."/>
            <person name="Tamse R."/>
            <person name="Vaysberg M."/>
            <person name="Wallender E.K."/>
            <person name="Wong C."/>
            <person name="Yamamura Y."/>
            <person name="Yuan S."/>
            <person name="Shinozaki K."/>
            <person name="Davis R.W."/>
            <person name="Theologis A."/>
            <person name="Ecker J.R."/>
        </authorList>
    </citation>
    <scope>NUCLEOTIDE SEQUENCE [LARGE SCALE MRNA]</scope>
    <source>
        <strain>cv. Columbia</strain>
    </source>
</reference>
<reference key="5">
    <citation type="submission" date="2006-07" db="EMBL/GenBank/DDBJ databases">
        <title>Large-scale analysis of RIKEN Arabidopsis full-length (RAFL) cDNAs.</title>
        <authorList>
            <person name="Totoki Y."/>
            <person name="Seki M."/>
            <person name="Ishida J."/>
            <person name="Nakajima M."/>
            <person name="Enju A."/>
            <person name="Kamiya A."/>
            <person name="Narusaka M."/>
            <person name="Shin-i T."/>
            <person name="Nakagawa M."/>
            <person name="Sakamoto N."/>
            <person name="Oishi K."/>
            <person name="Kohara Y."/>
            <person name="Kobayashi M."/>
            <person name="Toyoda A."/>
            <person name="Sakaki Y."/>
            <person name="Sakurai T."/>
            <person name="Iida K."/>
            <person name="Akiyama K."/>
            <person name="Satou M."/>
            <person name="Toyoda T."/>
            <person name="Konagaya A."/>
            <person name="Carninci P."/>
            <person name="Kawai J."/>
            <person name="Hayashizaki Y."/>
            <person name="Shinozaki K."/>
        </authorList>
    </citation>
    <scope>NUCLEOTIDE SEQUENCE [LARGE SCALE MRNA]</scope>
    <source>
        <strain>cv. Columbia</strain>
    </source>
</reference>
<reference key="6">
    <citation type="submission" date="2002-03" db="EMBL/GenBank/DDBJ databases">
        <title>Full-length cDNA from Arabidopsis thaliana.</title>
        <authorList>
            <person name="Brover V.V."/>
            <person name="Troukhan M.E."/>
            <person name="Alexandrov N.A."/>
            <person name="Lu Y.-P."/>
            <person name="Flavell R.B."/>
            <person name="Feldmann K.A."/>
        </authorList>
    </citation>
    <scope>NUCLEOTIDE SEQUENCE [LARGE SCALE MRNA]</scope>
</reference>
<reference key="7">
    <citation type="journal article" date="2005" name="Plant Cell">
        <title>Reverse genetic characterization of cytosolic acetyl-CoA generation by ATP-citrate lyase in Arabidopsis.</title>
        <authorList>
            <person name="Fatland B.L."/>
            <person name="Nikolau B.J."/>
            <person name="Wurtele E.S."/>
        </authorList>
    </citation>
    <scope>FUNCTION</scope>
</reference>
<comment type="function">
    <text evidence="2 3">ATP citrate-lyase is the primary enzyme responsible for the synthesis of cytosolic acetyl-CoA, used for the elongation of fatty acids and biosynthesis of isoprenoids, flavonoids and malonated derivatives. May supply substrate to the cytosolic acetyl-CoA carboxylase, which generates the malonyl-CoA used for the synthesis of a multitude of compounds, including very long chain fatty acids and flavonoids. Required for normal growth and development and elongation of C18 fatty acids to C20 to C24 fatty acids in seeds. In contrast to all known animal ACL enzymes having a homomeric structure, plant ACLs are composed of alpha and beta chains.</text>
</comment>
<comment type="catalytic activity">
    <reaction>
        <text>oxaloacetate + acetyl-CoA + ADP + phosphate = citrate + ATP + CoA</text>
        <dbReference type="Rhea" id="RHEA:21160"/>
        <dbReference type="ChEBI" id="CHEBI:16452"/>
        <dbReference type="ChEBI" id="CHEBI:16947"/>
        <dbReference type="ChEBI" id="CHEBI:30616"/>
        <dbReference type="ChEBI" id="CHEBI:43474"/>
        <dbReference type="ChEBI" id="CHEBI:57287"/>
        <dbReference type="ChEBI" id="CHEBI:57288"/>
        <dbReference type="ChEBI" id="CHEBI:456216"/>
        <dbReference type="EC" id="2.3.3.8"/>
    </reaction>
</comment>
<comment type="subunit">
    <text evidence="2">Heterooctamer of 4 alpha and 4 beta chains.</text>
</comment>
<comment type="subcellular location">
    <subcellularLocation>
        <location evidence="2">Cytoplasm</location>
        <location evidence="2">Cytosol</location>
    </subcellularLocation>
</comment>
<comment type="alternative products">
    <event type="alternative splicing"/>
    <isoform>
        <id>Q9SGY2-1</id>
        <name>1</name>
        <sequence type="displayed"/>
    </isoform>
    <text>A number of isoforms are produced. According to EST sequences.</text>
</comment>
<comment type="tissue specificity">
    <text evidence="2">Expressed in trichomes, epidermal leaf cells, anther tapetal cells, stigma and in young vascular bundles of expanding leaves, cotyledons, roots, pedicel of flowers and siliques.</text>
</comment>
<comment type="developmental stage">
    <text evidence="2">Expressed in flower buds at stage 6 of development in tapetal cells and at stage 10 in the epidermal cells of growing petals and ovaries. In young siliques, expressed transiently in the inner integument of the ovules just prior to testal deposition. Expressed in the developing embryo with a maximal level at the heart and torpedo stages. The expression then disappears in the mature embryo. During seed germination, expressed in the vascular bundles, apical meristem, epidermis of the seedling cotyledon, stem, and root. Highly expressed in the root tip of seedlings 4 days after imbibition.</text>
</comment>
<comment type="miscellaneous">
    <text>Plants silencing ACLA-1 show a severe dwarf and dark-green phenotype with some seedling lethal plants, reduced leaf cell size, altered cellular ultrastructure, altered plastid ultrastructure, hyperaccumulation of starch, increased accumulation of anthocyanins, chlorophylls and carotenoids in vegetative organs and decreased accumulation of epicuticular and cuticular waxes. These phenotypes can be complemented by exogenous supply of malonate.</text>
</comment>
<comment type="similarity">
    <text evidence="4">Belongs to the succinate/malate CoA ligase beta subunit family.</text>
</comment>
<comment type="sequence caution" evidence="4">
    <conflict type="erroneous initiation">
        <sequence resource="EMBL-CDS" id="BAD94933"/>
    </conflict>
    <text>Truncated N-terminus.</text>
</comment>
<proteinExistence type="evidence at protein level"/>
<name>ACLA1_ARATH</name>